<comment type="subcellular location">
    <subcellularLocation>
        <location evidence="1">Cytoplasm</location>
    </subcellularLocation>
</comment>
<comment type="similarity">
    <text evidence="1">Belongs to the TACO1 family.</text>
</comment>
<protein>
    <recommendedName>
        <fullName evidence="1">Probable transcriptional regulatory protein BF2589</fullName>
    </recommendedName>
</protein>
<accession>Q5LC77</accession>
<gene>
    <name type="ordered locus">BF2589</name>
</gene>
<dbReference type="EMBL" id="CR626927">
    <property type="protein sequence ID" value="CAH08289.1"/>
    <property type="molecule type" value="Genomic_DNA"/>
</dbReference>
<dbReference type="RefSeq" id="WP_008768977.1">
    <property type="nucleotide sequence ID" value="NZ_UFTH01000001.1"/>
</dbReference>
<dbReference type="SMR" id="Q5LC77"/>
<dbReference type="PaxDb" id="272559-BF9343_2508"/>
<dbReference type="KEGG" id="bfs:BF9343_2508"/>
<dbReference type="eggNOG" id="COG0217">
    <property type="taxonomic scope" value="Bacteria"/>
</dbReference>
<dbReference type="HOGENOM" id="CLU_062974_3_0_10"/>
<dbReference type="Proteomes" id="UP000006731">
    <property type="component" value="Chromosome"/>
</dbReference>
<dbReference type="GO" id="GO:0005829">
    <property type="term" value="C:cytosol"/>
    <property type="evidence" value="ECO:0007669"/>
    <property type="project" value="TreeGrafter"/>
</dbReference>
<dbReference type="GO" id="GO:0003677">
    <property type="term" value="F:DNA binding"/>
    <property type="evidence" value="ECO:0007669"/>
    <property type="project" value="UniProtKB-UniRule"/>
</dbReference>
<dbReference type="GO" id="GO:0006355">
    <property type="term" value="P:regulation of DNA-templated transcription"/>
    <property type="evidence" value="ECO:0007669"/>
    <property type="project" value="UniProtKB-UniRule"/>
</dbReference>
<dbReference type="FunFam" id="1.10.10.200:FF:000004">
    <property type="entry name" value="Probable transcriptional regulatory protein BSBG_02618"/>
    <property type="match status" value="1"/>
</dbReference>
<dbReference type="Gene3D" id="1.10.10.200">
    <property type="match status" value="1"/>
</dbReference>
<dbReference type="Gene3D" id="3.30.70.980">
    <property type="match status" value="2"/>
</dbReference>
<dbReference type="HAMAP" id="MF_00693">
    <property type="entry name" value="Transcrip_reg_TACO1"/>
    <property type="match status" value="1"/>
</dbReference>
<dbReference type="InterPro" id="IPR017856">
    <property type="entry name" value="Integrase-like_N"/>
</dbReference>
<dbReference type="InterPro" id="IPR048300">
    <property type="entry name" value="TACO1_YebC-like_2nd/3rd_dom"/>
</dbReference>
<dbReference type="InterPro" id="IPR049083">
    <property type="entry name" value="TACO1_YebC_N"/>
</dbReference>
<dbReference type="InterPro" id="IPR002876">
    <property type="entry name" value="Transcrip_reg_TACO1-like"/>
</dbReference>
<dbReference type="InterPro" id="IPR026564">
    <property type="entry name" value="Transcrip_reg_TACO1-like_dom3"/>
</dbReference>
<dbReference type="InterPro" id="IPR029072">
    <property type="entry name" value="YebC-like"/>
</dbReference>
<dbReference type="NCBIfam" id="NF009044">
    <property type="entry name" value="PRK12378.1"/>
    <property type="match status" value="1"/>
</dbReference>
<dbReference type="NCBIfam" id="TIGR01033">
    <property type="entry name" value="YebC/PmpR family DNA-binding transcriptional regulator"/>
    <property type="match status" value="1"/>
</dbReference>
<dbReference type="PANTHER" id="PTHR12532:SF6">
    <property type="entry name" value="TRANSCRIPTIONAL REGULATORY PROTEIN YEBC-RELATED"/>
    <property type="match status" value="1"/>
</dbReference>
<dbReference type="PANTHER" id="PTHR12532">
    <property type="entry name" value="TRANSLATIONAL ACTIVATOR OF CYTOCHROME C OXIDASE 1"/>
    <property type="match status" value="1"/>
</dbReference>
<dbReference type="Pfam" id="PF20772">
    <property type="entry name" value="TACO1_YebC_N"/>
    <property type="match status" value="1"/>
</dbReference>
<dbReference type="Pfam" id="PF01709">
    <property type="entry name" value="Transcrip_reg"/>
    <property type="match status" value="1"/>
</dbReference>
<dbReference type="SUPFAM" id="SSF75625">
    <property type="entry name" value="YebC-like"/>
    <property type="match status" value="1"/>
</dbReference>
<reference key="1">
    <citation type="journal article" date="2005" name="Science">
        <title>Extensive DNA inversions in the B. fragilis genome control variable gene expression.</title>
        <authorList>
            <person name="Cerdeno-Tarraga A.-M."/>
            <person name="Patrick S."/>
            <person name="Crossman L.C."/>
            <person name="Blakely G."/>
            <person name="Abratt V."/>
            <person name="Lennard N."/>
            <person name="Poxton I."/>
            <person name="Duerden B."/>
            <person name="Harris B."/>
            <person name="Quail M.A."/>
            <person name="Barron A."/>
            <person name="Clark L."/>
            <person name="Corton C."/>
            <person name="Doggett J."/>
            <person name="Holden M.T.G."/>
            <person name="Larke N."/>
            <person name="Line A."/>
            <person name="Lord A."/>
            <person name="Norbertczak H."/>
            <person name="Ormond D."/>
            <person name="Price C."/>
            <person name="Rabbinowitsch E."/>
            <person name="Woodward J."/>
            <person name="Barrell B.G."/>
            <person name="Parkhill J."/>
        </authorList>
    </citation>
    <scope>NUCLEOTIDE SEQUENCE [LARGE SCALE GENOMIC DNA]</scope>
    <source>
        <strain>ATCC 25285 / DSM 2151 / CCUG 4856 / JCM 11019 / LMG 10263 / NCTC 9343 / Onslow / VPI 2553 / EN-2</strain>
    </source>
</reference>
<keyword id="KW-0963">Cytoplasm</keyword>
<keyword id="KW-0238">DNA-binding</keyword>
<keyword id="KW-0804">Transcription</keyword>
<keyword id="KW-0805">Transcription regulation</keyword>
<feature type="chain" id="PRO_0000257032" description="Probable transcriptional regulatory protein BF2589">
    <location>
        <begin position="1"/>
        <end position="245"/>
    </location>
</feature>
<feature type="region of interest" description="Disordered" evidence="2">
    <location>
        <begin position="225"/>
        <end position="245"/>
    </location>
</feature>
<organism>
    <name type="scientific">Bacteroides fragilis (strain ATCC 25285 / DSM 2151 / CCUG 4856 / JCM 11019 / LMG 10263 / NCTC 9343 / Onslow / VPI 2553 / EN-2)</name>
    <dbReference type="NCBI Taxonomy" id="272559"/>
    <lineage>
        <taxon>Bacteria</taxon>
        <taxon>Pseudomonadati</taxon>
        <taxon>Bacteroidota</taxon>
        <taxon>Bacteroidia</taxon>
        <taxon>Bacteroidales</taxon>
        <taxon>Bacteroidaceae</taxon>
        <taxon>Bacteroides</taxon>
    </lineage>
</organism>
<proteinExistence type="inferred from homology"/>
<sequence length="245" mass="27863">MGRAFEYRKATKLKRWGNMARTFTRIGKQIAIAVKAGGPDPENNPHLRAVVATAKRENMPKDNVERAIKNAMGKDQKDYKEMNYEGYGPFGIAVFVETATDNTTRTVANVRSVFNKFGGTLGTSGSLDFMFSWKSMFTITKKEGVDMDDLILELIDYGVEEEYDEDEDEITLYGDPKSFAQIQKYLEENGFEVKGAEFTRIPNDEKDLTPEQRATIDKMVERLEEDEDVQNVYTNMKPADNEGEE</sequence>
<name>Y2589_BACFN</name>
<evidence type="ECO:0000255" key="1">
    <source>
        <dbReference type="HAMAP-Rule" id="MF_00693"/>
    </source>
</evidence>
<evidence type="ECO:0000256" key="2">
    <source>
        <dbReference type="SAM" id="MobiDB-lite"/>
    </source>
</evidence>